<protein>
    <recommendedName>
        <fullName>Uncharacterized protein TP_0974</fullName>
    </recommendedName>
</protein>
<name>Y974_TREPA</name>
<keyword id="KW-1185">Reference proteome</keyword>
<reference key="1">
    <citation type="journal article" date="1998" name="Science">
        <title>Complete genome sequence of Treponema pallidum, the syphilis spirochete.</title>
        <authorList>
            <person name="Fraser C.M."/>
            <person name="Norris S.J."/>
            <person name="Weinstock G.M."/>
            <person name="White O."/>
            <person name="Sutton G.G."/>
            <person name="Dodson R.J."/>
            <person name="Gwinn M.L."/>
            <person name="Hickey E.K."/>
            <person name="Clayton R.A."/>
            <person name="Ketchum K.A."/>
            <person name="Sodergren E."/>
            <person name="Hardham J.M."/>
            <person name="McLeod M.P."/>
            <person name="Salzberg S.L."/>
            <person name="Peterson J.D."/>
            <person name="Khalak H.G."/>
            <person name="Richardson D.L."/>
            <person name="Howell J.K."/>
            <person name="Chidambaram M."/>
            <person name="Utterback T.R."/>
            <person name="McDonald L.A."/>
            <person name="Artiach P."/>
            <person name="Bowman C."/>
            <person name="Cotton M.D."/>
            <person name="Fujii C."/>
            <person name="Garland S.A."/>
            <person name="Hatch B."/>
            <person name="Horst K."/>
            <person name="Roberts K.M."/>
            <person name="Sandusky M."/>
            <person name="Weidman J.F."/>
            <person name="Smith H.O."/>
            <person name="Venter J.C."/>
        </authorList>
    </citation>
    <scope>NUCLEOTIDE SEQUENCE [LARGE SCALE GENOMIC DNA]</scope>
    <source>
        <strain>Nichols</strain>
    </source>
</reference>
<sequence>MMIDKLSGLDPVQNLRASCASEHVARAPAGDEITVSAEAQKKAELYLALEAVRSAPDVREYKIAAAEQKLADPAYLERALSHVVERFLEEQNL</sequence>
<organism>
    <name type="scientific">Treponema pallidum (strain Nichols)</name>
    <dbReference type="NCBI Taxonomy" id="243276"/>
    <lineage>
        <taxon>Bacteria</taxon>
        <taxon>Pseudomonadati</taxon>
        <taxon>Spirochaetota</taxon>
        <taxon>Spirochaetia</taxon>
        <taxon>Spirochaetales</taxon>
        <taxon>Treponemataceae</taxon>
        <taxon>Treponema</taxon>
    </lineage>
</organism>
<dbReference type="EMBL" id="AE000520">
    <property type="protein sequence ID" value="AAC65939.1"/>
    <property type="molecule type" value="Genomic_DNA"/>
</dbReference>
<dbReference type="PIR" id="D71257">
    <property type="entry name" value="D71257"/>
</dbReference>
<dbReference type="RefSeq" id="WP_010882418.1">
    <property type="nucleotide sequence ID" value="NC_021490.2"/>
</dbReference>
<dbReference type="SMR" id="O83939"/>
<dbReference type="IntAct" id="O83939">
    <property type="interactions" value="24"/>
</dbReference>
<dbReference type="STRING" id="243276.TP_0974"/>
<dbReference type="EnsemblBacteria" id="AAC65939">
    <property type="protein sequence ID" value="AAC65939"/>
    <property type="gene ID" value="TP_0974"/>
</dbReference>
<dbReference type="KEGG" id="tpa:TP_0974"/>
<dbReference type="KEGG" id="tpw:TPANIC_0974"/>
<dbReference type="eggNOG" id="ENOG502ZRHI">
    <property type="taxonomic scope" value="Bacteria"/>
</dbReference>
<dbReference type="HOGENOM" id="CLU_184596_0_0_12"/>
<dbReference type="OrthoDB" id="361428at2"/>
<dbReference type="Proteomes" id="UP000000811">
    <property type="component" value="Chromosome"/>
</dbReference>
<proteinExistence type="predicted"/>
<feature type="chain" id="PRO_0000202367" description="Uncharacterized protein TP_0974">
    <location>
        <begin position="1"/>
        <end position="93"/>
    </location>
</feature>
<accession>O83939</accession>
<gene>
    <name type="ordered locus">TP_0974</name>
</gene>